<dbReference type="EMBL" id="M60116">
    <property type="protein sequence ID" value="AAA23279.1"/>
    <property type="molecule type" value="Genomic_DNA"/>
</dbReference>
<dbReference type="PIR" id="S29120">
    <property type="entry name" value="RUCLEP"/>
</dbReference>
<dbReference type="RefSeq" id="WP_003447684.1">
    <property type="nucleotide sequence ID" value="NZ_LFYL01000002.1"/>
</dbReference>
<dbReference type="PDB" id="1B13">
    <property type="method" value="X-ray"/>
    <property type="resolution" value="1.50 A"/>
    <property type="chains" value="A=1-54"/>
</dbReference>
<dbReference type="PDB" id="1B2J">
    <property type="method" value="X-ray"/>
    <property type="resolution" value="1.60 A"/>
    <property type="chains" value="A=1-54"/>
</dbReference>
<dbReference type="PDB" id="1B2O">
    <property type="method" value="X-ray"/>
    <property type="resolution" value="1.90 A"/>
    <property type="chains" value="A/B=1-54"/>
</dbReference>
<dbReference type="PDB" id="1BE7">
    <property type="method" value="X-ray"/>
    <property type="resolution" value="1.65 A"/>
    <property type="chains" value="A=1-54"/>
</dbReference>
<dbReference type="PDB" id="1BFY">
    <property type="method" value="NMR"/>
    <property type="chains" value="A=1-54"/>
</dbReference>
<dbReference type="PDB" id="1C09">
    <property type="method" value="X-ray"/>
    <property type="resolution" value="1.60 A"/>
    <property type="chains" value="A/B/C=1-54"/>
</dbReference>
<dbReference type="PDB" id="1FHH">
    <property type="method" value="X-ray"/>
    <property type="resolution" value="1.50 A"/>
    <property type="chains" value="A=1-54"/>
</dbReference>
<dbReference type="PDB" id="1FHM">
    <property type="method" value="X-ray"/>
    <property type="resolution" value="1.50 A"/>
    <property type="chains" value="A=1-54"/>
</dbReference>
<dbReference type="PDB" id="1IRN">
    <property type="method" value="X-ray"/>
    <property type="resolution" value="1.20 A"/>
    <property type="chains" value="A=1-54"/>
</dbReference>
<dbReference type="PDB" id="1IRO">
    <property type="method" value="X-ray"/>
    <property type="resolution" value="1.10 A"/>
    <property type="chains" value="A=1-54"/>
</dbReference>
<dbReference type="PDB" id="1R0F">
    <property type="method" value="X-ray"/>
    <property type="resolution" value="1.60 A"/>
    <property type="chains" value="A=1-54"/>
</dbReference>
<dbReference type="PDB" id="1R0G">
    <property type="method" value="X-ray"/>
    <property type="resolution" value="1.60 A"/>
    <property type="chains" value="A=1-54"/>
</dbReference>
<dbReference type="PDB" id="1R0H">
    <property type="method" value="X-ray"/>
    <property type="resolution" value="1.70 A"/>
    <property type="chains" value="A=1-54"/>
</dbReference>
<dbReference type="PDB" id="1R0I">
    <property type="method" value="X-ray"/>
    <property type="resolution" value="1.50 A"/>
    <property type="chains" value="A=1-54"/>
</dbReference>
<dbReference type="PDB" id="1R0J">
    <property type="method" value="X-ray"/>
    <property type="resolution" value="2.00 A"/>
    <property type="chains" value="A=1-54"/>
</dbReference>
<dbReference type="PDB" id="1SMM">
    <property type="method" value="X-ray"/>
    <property type="resolution" value="1.36 A"/>
    <property type="chains" value="A=1-54"/>
</dbReference>
<dbReference type="PDB" id="1SMU">
    <property type="method" value="X-ray"/>
    <property type="resolution" value="1.43 A"/>
    <property type="chains" value="A=1-54"/>
</dbReference>
<dbReference type="PDB" id="1SMW">
    <property type="method" value="X-ray"/>
    <property type="resolution" value="1.38 A"/>
    <property type="chains" value="A=1-54"/>
</dbReference>
<dbReference type="PDB" id="1T9O">
    <property type="method" value="X-ray"/>
    <property type="resolution" value="2.00 A"/>
    <property type="chains" value="A/B/C=1-54"/>
</dbReference>
<dbReference type="PDB" id="1T9P">
    <property type="method" value="X-ray"/>
    <property type="resolution" value="1.50 A"/>
    <property type="chains" value="A/B/C=1-54"/>
</dbReference>
<dbReference type="PDB" id="1T9Q">
    <property type="method" value="X-ray"/>
    <property type="resolution" value="1.80 A"/>
    <property type="chains" value="A=1-54"/>
</dbReference>
<dbReference type="PDB" id="2PVE">
    <property type="method" value="X-ray"/>
    <property type="resolution" value="0.79 A"/>
    <property type="chains" value="A/B/C=1-54"/>
</dbReference>
<dbReference type="PDB" id="4MBS">
    <property type="method" value="X-ray"/>
    <property type="resolution" value="2.71 A"/>
    <property type="chains" value="A/B=1-54"/>
</dbReference>
<dbReference type="PDB" id="4RXN">
    <property type="method" value="X-ray"/>
    <property type="resolution" value="1.20 A"/>
    <property type="chains" value="A=1-54"/>
</dbReference>
<dbReference type="PDB" id="4XNV">
    <property type="method" value="X-ray"/>
    <property type="resolution" value="2.20 A"/>
    <property type="chains" value="A=1-54"/>
</dbReference>
<dbReference type="PDB" id="4XNW">
    <property type="method" value="X-ray"/>
    <property type="resolution" value="2.70 A"/>
    <property type="chains" value="A/C=1-54"/>
</dbReference>
<dbReference type="PDB" id="5RXN">
    <property type="method" value="X-ray"/>
    <property type="resolution" value="1.20 A"/>
    <property type="chains" value="A=1-54"/>
</dbReference>
<dbReference type="PDB" id="5UIW">
    <property type="method" value="X-ray"/>
    <property type="resolution" value="2.20 A"/>
    <property type="chains" value="A=1-54"/>
</dbReference>
<dbReference type="PDB" id="5VBL">
    <property type="method" value="X-ray"/>
    <property type="resolution" value="2.60 A"/>
    <property type="chains" value="B=1-54"/>
</dbReference>
<dbReference type="PDB" id="6AKX">
    <property type="method" value="X-ray"/>
    <property type="resolution" value="2.80 A"/>
    <property type="chains" value="A/B=1-54"/>
</dbReference>
<dbReference type="PDB" id="6AKY">
    <property type="method" value="X-ray"/>
    <property type="resolution" value="2.80 A"/>
    <property type="chains" value="A=1-54"/>
</dbReference>
<dbReference type="PDB" id="6BD4">
    <property type="method" value="X-ray"/>
    <property type="resolution" value="2.40 A"/>
    <property type="chains" value="A=1-54"/>
</dbReference>
<dbReference type="PDB" id="6GPS">
    <property type="method" value="X-ray"/>
    <property type="resolution" value="3.30 A"/>
    <property type="chains" value="A=1-54"/>
</dbReference>
<dbReference type="PDB" id="6GPX">
    <property type="method" value="X-ray"/>
    <property type="resolution" value="2.70 A"/>
    <property type="chains" value="A/B=1-54"/>
</dbReference>
<dbReference type="PDB" id="6IIU">
    <property type="method" value="X-ray"/>
    <property type="resolution" value="2.50 A"/>
    <property type="chains" value="A=1-54"/>
</dbReference>
<dbReference type="PDB" id="6IIV">
    <property type="method" value="X-ray"/>
    <property type="resolution" value="3.00 A"/>
    <property type="chains" value="A=1-54"/>
</dbReference>
<dbReference type="PDB" id="6KNM">
    <property type="method" value="X-ray"/>
    <property type="resolution" value="3.20 A"/>
    <property type="chains" value="B=1-54"/>
</dbReference>
<dbReference type="PDB" id="6LI2">
    <property type="method" value="X-ray"/>
    <property type="resolution" value="2.80 A"/>
    <property type="chains" value="A=2-54"/>
</dbReference>
<dbReference type="PDB" id="6LN2">
    <property type="method" value="X-ray"/>
    <property type="resolution" value="3.20 A"/>
    <property type="chains" value="A=1-54"/>
</dbReference>
<dbReference type="PDB" id="6ME6">
    <property type="method" value="X-ray"/>
    <property type="resolution" value="2.80 A"/>
    <property type="chains" value="A/B=1-53"/>
</dbReference>
<dbReference type="PDB" id="6ME7">
    <property type="method" value="X-ray"/>
    <property type="resolution" value="3.20 A"/>
    <property type="chains" value="A/B=1-53"/>
</dbReference>
<dbReference type="PDB" id="6ME8">
    <property type="method" value="X-ray"/>
    <property type="resolution" value="3.10 A"/>
    <property type="chains" value="A/B=1-53"/>
</dbReference>
<dbReference type="PDB" id="6ME9">
    <property type="method" value="X-ray"/>
    <property type="resolution" value="3.30 A"/>
    <property type="chains" value="A/B=1-53"/>
</dbReference>
<dbReference type="PDB" id="7F1T">
    <property type="method" value="X-ray"/>
    <property type="resolution" value="2.60 A"/>
    <property type="chains" value="A=1-54"/>
</dbReference>
<dbReference type="PDB" id="7SUS">
    <property type="method" value="X-ray"/>
    <property type="resolution" value="2.70 A"/>
    <property type="chains" value="A=1-54"/>
</dbReference>
<dbReference type="PDBsum" id="1B13"/>
<dbReference type="PDBsum" id="1B2J"/>
<dbReference type="PDBsum" id="1B2O"/>
<dbReference type="PDBsum" id="1BE7"/>
<dbReference type="PDBsum" id="1BFY"/>
<dbReference type="PDBsum" id="1C09"/>
<dbReference type="PDBsum" id="1FHH"/>
<dbReference type="PDBsum" id="1FHM"/>
<dbReference type="PDBsum" id="1IRN"/>
<dbReference type="PDBsum" id="1IRO"/>
<dbReference type="PDBsum" id="1R0F"/>
<dbReference type="PDBsum" id="1R0G"/>
<dbReference type="PDBsum" id="1R0H"/>
<dbReference type="PDBsum" id="1R0I"/>
<dbReference type="PDBsum" id="1R0J"/>
<dbReference type="PDBsum" id="1SMM"/>
<dbReference type="PDBsum" id="1SMU"/>
<dbReference type="PDBsum" id="1SMW"/>
<dbReference type="PDBsum" id="1T9O"/>
<dbReference type="PDBsum" id="1T9P"/>
<dbReference type="PDBsum" id="1T9Q"/>
<dbReference type="PDBsum" id="2PVE"/>
<dbReference type="PDBsum" id="4MBS"/>
<dbReference type="PDBsum" id="4RXN"/>
<dbReference type="PDBsum" id="4XNV"/>
<dbReference type="PDBsum" id="4XNW"/>
<dbReference type="PDBsum" id="5RXN"/>
<dbReference type="PDBsum" id="5UIW"/>
<dbReference type="PDBsum" id="5VBL"/>
<dbReference type="PDBsum" id="6AKX"/>
<dbReference type="PDBsum" id="6AKY"/>
<dbReference type="PDBsum" id="6BD4"/>
<dbReference type="PDBsum" id="6GPS"/>
<dbReference type="PDBsum" id="6GPX"/>
<dbReference type="PDBsum" id="6IIU"/>
<dbReference type="PDBsum" id="6IIV"/>
<dbReference type="PDBsum" id="6KNM"/>
<dbReference type="PDBsum" id="6LI2"/>
<dbReference type="PDBsum" id="6LN2"/>
<dbReference type="PDBsum" id="6ME6"/>
<dbReference type="PDBsum" id="6ME7"/>
<dbReference type="PDBsum" id="6ME8"/>
<dbReference type="PDBsum" id="6ME9"/>
<dbReference type="PDBsum" id="7F1T"/>
<dbReference type="PDBsum" id="7SUS"/>
<dbReference type="BMRB" id="P00268"/>
<dbReference type="PCDDB" id="P00268"/>
<dbReference type="SMR" id="P00268"/>
<dbReference type="GeneID" id="93075893"/>
<dbReference type="OrthoDB" id="9758182at2"/>
<dbReference type="SABIO-RK" id="P00268"/>
<dbReference type="EvolutionaryTrace" id="P00268"/>
<dbReference type="GO" id="GO:0009055">
    <property type="term" value="F:electron transfer activity"/>
    <property type="evidence" value="ECO:0007669"/>
    <property type="project" value="InterPro"/>
</dbReference>
<dbReference type="GO" id="GO:0005506">
    <property type="term" value="F:iron ion binding"/>
    <property type="evidence" value="ECO:0007669"/>
    <property type="project" value="InterPro"/>
</dbReference>
<dbReference type="GO" id="GO:0043448">
    <property type="term" value="P:alkane catabolic process"/>
    <property type="evidence" value="ECO:0007669"/>
    <property type="project" value="TreeGrafter"/>
</dbReference>
<dbReference type="CDD" id="cd00730">
    <property type="entry name" value="rubredoxin"/>
    <property type="match status" value="1"/>
</dbReference>
<dbReference type="FunFam" id="2.20.28.10:FF:000001">
    <property type="entry name" value="Rubredoxin"/>
    <property type="match status" value="1"/>
</dbReference>
<dbReference type="Gene3D" id="2.20.28.10">
    <property type="match status" value="1"/>
</dbReference>
<dbReference type="InterPro" id="IPR024922">
    <property type="entry name" value="Rubredoxin"/>
</dbReference>
<dbReference type="InterPro" id="IPR024934">
    <property type="entry name" value="Rubredoxin-like_dom"/>
</dbReference>
<dbReference type="InterPro" id="IPR024935">
    <property type="entry name" value="Rubredoxin_dom"/>
</dbReference>
<dbReference type="InterPro" id="IPR050526">
    <property type="entry name" value="Rubredoxin_ET"/>
</dbReference>
<dbReference type="InterPro" id="IPR018527">
    <property type="entry name" value="Rubredoxin_Fe_BS"/>
</dbReference>
<dbReference type="NCBIfam" id="NF045768">
    <property type="entry name" value="RubredRD"/>
    <property type="match status" value="1"/>
</dbReference>
<dbReference type="PANTHER" id="PTHR47627">
    <property type="entry name" value="RUBREDOXIN"/>
    <property type="match status" value="1"/>
</dbReference>
<dbReference type="PANTHER" id="PTHR47627:SF1">
    <property type="entry name" value="RUBREDOXIN-1-RELATED"/>
    <property type="match status" value="1"/>
</dbReference>
<dbReference type="Pfam" id="PF00301">
    <property type="entry name" value="Rubredoxin"/>
    <property type="match status" value="1"/>
</dbReference>
<dbReference type="PIRSF" id="PIRSF000071">
    <property type="entry name" value="Rubredoxin"/>
    <property type="match status" value="1"/>
</dbReference>
<dbReference type="PRINTS" id="PR00163">
    <property type="entry name" value="RUBREDOXIN"/>
</dbReference>
<dbReference type="SUPFAM" id="SSF57802">
    <property type="entry name" value="Rubredoxin-like"/>
    <property type="match status" value="1"/>
</dbReference>
<dbReference type="PROSITE" id="PS00202">
    <property type="entry name" value="RUBREDOXIN"/>
    <property type="match status" value="1"/>
</dbReference>
<dbReference type="PROSITE" id="PS50903">
    <property type="entry name" value="RUBREDOXIN_LIKE"/>
    <property type="match status" value="1"/>
</dbReference>
<comment type="function">
    <text>Rubredoxin is a small nonheme, iron protein lacking acid-labile sulfide. Its single Fe, chelated to 4 Cys, functions as an electron acceptor and may also stabilize the conformation of the molecule.</text>
</comment>
<comment type="cofactor">
    <cofactor>
        <name>Fe(3+)</name>
        <dbReference type="ChEBI" id="CHEBI:29034"/>
    </cofactor>
    <text>Binds 1 Fe(3+) ion per subunit.</text>
</comment>
<comment type="similarity">
    <text evidence="4">Belongs to the rubredoxin family.</text>
</comment>
<organism>
    <name type="scientific">Clostridium pasteurianum</name>
    <dbReference type="NCBI Taxonomy" id="1501"/>
    <lineage>
        <taxon>Bacteria</taxon>
        <taxon>Bacillati</taxon>
        <taxon>Bacillota</taxon>
        <taxon>Clostridia</taxon>
        <taxon>Eubacteriales</taxon>
        <taxon>Clostridiaceae</taxon>
        <taxon>Clostridium</taxon>
    </lineage>
</organism>
<name>RUBR_CLOPA</name>
<proteinExistence type="evidence at protein level"/>
<feature type="chain" id="PRO_0000135030" description="Rubredoxin">
    <location>
        <begin position="1"/>
        <end position="54"/>
    </location>
</feature>
<feature type="domain" description="Rubredoxin-like" evidence="1">
    <location>
        <begin position="1"/>
        <end position="54"/>
    </location>
</feature>
<feature type="binding site" evidence="1 2">
    <location>
        <position position="6"/>
    </location>
    <ligand>
        <name>Fe cation</name>
        <dbReference type="ChEBI" id="CHEBI:24875"/>
    </ligand>
</feature>
<feature type="binding site" evidence="1 2">
    <location>
        <position position="9"/>
    </location>
    <ligand>
        <name>Fe cation</name>
        <dbReference type="ChEBI" id="CHEBI:24875"/>
    </ligand>
</feature>
<feature type="binding site" evidence="1 2">
    <location>
        <position position="39"/>
    </location>
    <ligand>
        <name>Fe cation</name>
        <dbReference type="ChEBI" id="CHEBI:24875"/>
    </ligand>
</feature>
<feature type="binding site" evidence="1 2">
    <location>
        <position position="42"/>
    </location>
    <ligand>
        <name>Fe cation</name>
        <dbReference type="ChEBI" id="CHEBI:24875"/>
    </ligand>
</feature>
<feature type="modified residue" description="N-formylmethionine" evidence="3">
    <location>
        <position position="1"/>
    </location>
</feature>
<feature type="strand" evidence="6">
    <location>
        <begin position="4"/>
        <end position="6"/>
    </location>
</feature>
<feature type="turn" evidence="6">
    <location>
        <begin position="7"/>
        <end position="9"/>
    </location>
</feature>
<feature type="strand" evidence="7">
    <location>
        <begin position="12"/>
        <end position="14"/>
    </location>
</feature>
<feature type="turn" evidence="6">
    <location>
        <begin position="15"/>
        <end position="17"/>
    </location>
</feature>
<feature type="helix" evidence="6">
    <location>
        <begin position="20"/>
        <end position="22"/>
    </location>
</feature>
<feature type="helix" evidence="6">
    <location>
        <begin position="30"/>
        <end position="32"/>
    </location>
</feature>
<feature type="turn" evidence="6">
    <location>
        <begin position="40"/>
        <end position="42"/>
    </location>
</feature>
<feature type="helix" evidence="6">
    <location>
        <begin position="46"/>
        <end position="48"/>
    </location>
</feature>
<feature type="strand" evidence="6">
    <location>
        <begin position="49"/>
        <end position="51"/>
    </location>
</feature>
<protein>
    <recommendedName>
        <fullName>Rubredoxin</fullName>
        <shortName>Rd</shortName>
    </recommendedName>
</protein>
<sequence length="54" mass="6048">MKKYTCTVCGYIYNPEDGDPDNGVNPGTDFKDIPDDWVCPLCGVGKDQFEEVEE</sequence>
<reference key="1">
    <citation type="journal article" date="1992" name="Biochem. J.">
        <title>Cloning, sequencing and expression in Escherichia coli of the rubredoxin gene from Clostridium pasteurianum.</title>
        <authorList>
            <person name="Mathieu I."/>
            <person name="Meyer J."/>
            <person name="Moulis J.-M."/>
        </authorList>
    </citation>
    <scope>NUCLEOTIDE SEQUENCE [GENOMIC DNA]</scope>
    <scope>FORMYLATION AT MET-1</scope>
    <scope>PARTIAL PROTEIN SEQUENCE</scope>
</reference>
<reference key="2">
    <citation type="thesis" date="1972" institute="George Washington University" country="United States">
        <authorList>
            <person name="McCarthy K.F."/>
        </authorList>
    </citation>
    <scope>PRELIMINARY PROTEIN SEQUENCE</scope>
</reference>
<reference key="3">
    <citation type="journal article" date="1973" name="Acta Crystallogr. B">
        <title>Refinement of the model of a protein, rubredoxin at 1.5-A resolution.</title>
        <authorList>
            <person name="Watenpaugh K.D."/>
            <person name="Siecker L.C."/>
            <person name="Herriott J.R."/>
            <person name="Jensen L.H."/>
        </authorList>
    </citation>
    <scope>X-RAY CRYSTALLOGRAPHY (1.5 ANGSTROMS)</scope>
</reference>
<reference key="4">
    <citation type="journal article" date="1980" name="J. Mol. Biol.">
        <title>Crystallographic refinement of rubredoxin at 1.2-A resolution.</title>
        <authorList>
            <person name="Watenpaugh K.D."/>
            <person name="Siecker L.C."/>
            <person name="Jensen L.H."/>
        </authorList>
    </citation>
    <scope>X-RAY CRYSTALLOGRAPHY (1.2 ANGSTROMS)</scope>
</reference>
<reference key="5">
    <citation type="journal article" date="1999" name="Acta Crystallogr. D">
        <title>Rubredoxin from Clostridium pasteurianum. Structures of G10A, G43A and G10VG43A mutant proteins. Mutation of conserved glycine 10 to valine causes the 9-10 peptide link to invert.</title>
        <authorList>
            <person name="Maher M.J."/>
            <person name="Xiao Z."/>
            <person name="Wilce M.C."/>
            <person name="Guss J.M."/>
            <person name="Wedd A.G."/>
        </authorList>
    </citation>
    <scope>X-RAY CRYSTALLOGRAPHY (1.5 ANGSTROMS)</scope>
</reference>
<reference evidence="5" key="6">
    <citation type="journal article" date="2018" name="Nature">
        <title>Crystal structure of the Frizzled 4 receptor in a ligand-free state.</title>
        <authorList>
            <person name="Yang S."/>
            <person name="Wu Y."/>
            <person name="Xu T.H."/>
            <person name="de Waal P.W."/>
            <person name="He Y."/>
            <person name="Pu M."/>
            <person name="Chen Y."/>
            <person name="DeBruine Z.J."/>
            <person name="Zhang B."/>
            <person name="Zaidi S.A."/>
            <person name="Popov P."/>
            <person name="Guo Y."/>
            <person name="Han G.W."/>
            <person name="Lu Y."/>
            <person name="Suino-Powell K."/>
            <person name="Dong S."/>
            <person name="Harikumar K.G."/>
            <person name="Miller L.J."/>
            <person name="Katritch V."/>
            <person name="Xu H.E."/>
            <person name="Shui W."/>
            <person name="Stevens R.C."/>
            <person name="Melcher K."/>
            <person name="Zhao S."/>
            <person name="Xu F."/>
        </authorList>
    </citation>
    <scope>X-RAY CRYSTALLOGRAPHY (2.40 ANGSTROMS)</scope>
</reference>
<keyword id="KW-0002">3D-structure</keyword>
<keyword id="KW-0903">Direct protein sequencing</keyword>
<keyword id="KW-0249">Electron transport</keyword>
<keyword id="KW-0291">Formylation</keyword>
<keyword id="KW-0408">Iron</keyword>
<keyword id="KW-0479">Metal-binding</keyword>
<keyword id="KW-0813">Transport</keyword>
<accession>P00268</accession>
<evidence type="ECO:0000255" key="1">
    <source>
        <dbReference type="PROSITE-ProRule" id="PRU00241"/>
    </source>
</evidence>
<evidence type="ECO:0000269" key="2">
    <source>
    </source>
</evidence>
<evidence type="ECO:0000269" key="3">
    <source>
    </source>
</evidence>
<evidence type="ECO:0000305" key="4"/>
<evidence type="ECO:0007744" key="5">
    <source>
        <dbReference type="PDB" id="6BD4"/>
    </source>
</evidence>
<evidence type="ECO:0007829" key="6">
    <source>
        <dbReference type="PDB" id="2PVE"/>
    </source>
</evidence>
<evidence type="ECO:0007829" key="7">
    <source>
        <dbReference type="PDB" id="6ME7"/>
    </source>
</evidence>